<sequence length="66" mass="7187">MIRILVLMITFTLMTGSALCSIEQLMRVFGGGSVGGGSRLDINRRVTIVPPEGELSFGYGFRPGFY</sequence>
<reference key="1">
    <citation type="journal article" date="1995" name="BioTechniques">
        <title>Method for attachment of microscopic preparations on glass for in situ hybridization, PRINS and in situ PCR studies.</title>
        <authorList>
            <person name="Dyanov H.M."/>
            <person name="Dzitoeva S.G."/>
        </authorList>
    </citation>
    <scope>NUCLEOTIDE SEQUENCE [MRNA]</scope>
    <source>
        <strain>Oregon-RC</strain>
        <tissue>Ejaculatory bulb</tissue>
    </source>
</reference>
<reference key="2">
    <citation type="journal article" date="2000" name="Science">
        <title>The genome sequence of Drosophila melanogaster.</title>
        <authorList>
            <person name="Adams M.D."/>
            <person name="Celniker S.E."/>
            <person name="Holt R.A."/>
            <person name="Evans C.A."/>
            <person name="Gocayne J.D."/>
            <person name="Amanatides P.G."/>
            <person name="Scherer S.E."/>
            <person name="Li P.W."/>
            <person name="Hoskins R.A."/>
            <person name="Galle R.F."/>
            <person name="George R.A."/>
            <person name="Lewis S.E."/>
            <person name="Richards S."/>
            <person name="Ashburner M."/>
            <person name="Henderson S.N."/>
            <person name="Sutton G.G."/>
            <person name="Wortman J.R."/>
            <person name="Yandell M.D."/>
            <person name="Zhang Q."/>
            <person name="Chen L.X."/>
            <person name="Brandon R.C."/>
            <person name="Rogers Y.-H.C."/>
            <person name="Blazej R.G."/>
            <person name="Champe M."/>
            <person name="Pfeiffer B.D."/>
            <person name="Wan K.H."/>
            <person name="Doyle C."/>
            <person name="Baxter E.G."/>
            <person name="Helt G."/>
            <person name="Nelson C.R."/>
            <person name="Miklos G.L.G."/>
            <person name="Abril J.F."/>
            <person name="Agbayani A."/>
            <person name="An H.-J."/>
            <person name="Andrews-Pfannkoch C."/>
            <person name="Baldwin D."/>
            <person name="Ballew R.M."/>
            <person name="Basu A."/>
            <person name="Baxendale J."/>
            <person name="Bayraktaroglu L."/>
            <person name="Beasley E.M."/>
            <person name="Beeson K.Y."/>
            <person name="Benos P.V."/>
            <person name="Berman B.P."/>
            <person name="Bhandari D."/>
            <person name="Bolshakov S."/>
            <person name="Borkova D."/>
            <person name="Botchan M.R."/>
            <person name="Bouck J."/>
            <person name="Brokstein P."/>
            <person name="Brottier P."/>
            <person name="Burtis K.C."/>
            <person name="Busam D.A."/>
            <person name="Butler H."/>
            <person name="Cadieu E."/>
            <person name="Center A."/>
            <person name="Chandra I."/>
            <person name="Cherry J.M."/>
            <person name="Cawley S."/>
            <person name="Dahlke C."/>
            <person name="Davenport L.B."/>
            <person name="Davies P."/>
            <person name="de Pablos B."/>
            <person name="Delcher A."/>
            <person name="Deng Z."/>
            <person name="Mays A.D."/>
            <person name="Dew I."/>
            <person name="Dietz S.M."/>
            <person name="Dodson K."/>
            <person name="Doup L.E."/>
            <person name="Downes M."/>
            <person name="Dugan-Rocha S."/>
            <person name="Dunkov B.C."/>
            <person name="Dunn P."/>
            <person name="Durbin K.J."/>
            <person name="Evangelista C.C."/>
            <person name="Ferraz C."/>
            <person name="Ferriera S."/>
            <person name="Fleischmann W."/>
            <person name="Fosler C."/>
            <person name="Gabrielian A.E."/>
            <person name="Garg N.S."/>
            <person name="Gelbart W.M."/>
            <person name="Glasser K."/>
            <person name="Glodek A."/>
            <person name="Gong F."/>
            <person name="Gorrell J.H."/>
            <person name="Gu Z."/>
            <person name="Guan P."/>
            <person name="Harris M."/>
            <person name="Harris N.L."/>
            <person name="Harvey D.A."/>
            <person name="Heiman T.J."/>
            <person name="Hernandez J.R."/>
            <person name="Houck J."/>
            <person name="Hostin D."/>
            <person name="Houston K.A."/>
            <person name="Howland T.J."/>
            <person name="Wei M.-H."/>
            <person name="Ibegwam C."/>
            <person name="Jalali M."/>
            <person name="Kalush F."/>
            <person name="Karpen G.H."/>
            <person name="Ke Z."/>
            <person name="Kennison J.A."/>
            <person name="Ketchum K.A."/>
            <person name="Kimmel B.E."/>
            <person name="Kodira C.D."/>
            <person name="Kraft C.L."/>
            <person name="Kravitz S."/>
            <person name="Kulp D."/>
            <person name="Lai Z."/>
            <person name="Lasko P."/>
            <person name="Lei Y."/>
            <person name="Levitsky A.A."/>
            <person name="Li J.H."/>
            <person name="Li Z."/>
            <person name="Liang Y."/>
            <person name="Lin X."/>
            <person name="Liu X."/>
            <person name="Mattei B."/>
            <person name="McIntosh T.C."/>
            <person name="McLeod M.P."/>
            <person name="McPherson D."/>
            <person name="Merkulov G."/>
            <person name="Milshina N.V."/>
            <person name="Mobarry C."/>
            <person name="Morris J."/>
            <person name="Moshrefi A."/>
            <person name="Mount S.M."/>
            <person name="Moy M."/>
            <person name="Murphy B."/>
            <person name="Murphy L."/>
            <person name="Muzny D.M."/>
            <person name="Nelson D.L."/>
            <person name="Nelson D.R."/>
            <person name="Nelson K.A."/>
            <person name="Nixon K."/>
            <person name="Nusskern D.R."/>
            <person name="Pacleb J.M."/>
            <person name="Palazzolo M."/>
            <person name="Pittman G.S."/>
            <person name="Pan S."/>
            <person name="Pollard J."/>
            <person name="Puri V."/>
            <person name="Reese M.G."/>
            <person name="Reinert K."/>
            <person name="Remington K."/>
            <person name="Saunders R.D.C."/>
            <person name="Scheeler F."/>
            <person name="Shen H."/>
            <person name="Shue B.C."/>
            <person name="Siden-Kiamos I."/>
            <person name="Simpson M."/>
            <person name="Skupski M.P."/>
            <person name="Smith T.J."/>
            <person name="Spier E."/>
            <person name="Spradling A.C."/>
            <person name="Stapleton M."/>
            <person name="Strong R."/>
            <person name="Sun E."/>
            <person name="Svirskas R."/>
            <person name="Tector C."/>
            <person name="Turner R."/>
            <person name="Venter E."/>
            <person name="Wang A.H."/>
            <person name="Wang X."/>
            <person name="Wang Z.-Y."/>
            <person name="Wassarman D.A."/>
            <person name="Weinstock G.M."/>
            <person name="Weissenbach J."/>
            <person name="Williams S.M."/>
            <person name="Woodage T."/>
            <person name="Worley K.C."/>
            <person name="Wu D."/>
            <person name="Yang S."/>
            <person name="Yao Q.A."/>
            <person name="Ye J."/>
            <person name="Yeh R.-F."/>
            <person name="Zaveri J.S."/>
            <person name="Zhan M."/>
            <person name="Zhang G."/>
            <person name="Zhao Q."/>
            <person name="Zheng L."/>
            <person name="Zheng X.H."/>
            <person name="Zhong F.N."/>
            <person name="Zhong W."/>
            <person name="Zhou X."/>
            <person name="Zhu S.C."/>
            <person name="Zhu X."/>
            <person name="Smith H.O."/>
            <person name="Gibbs R.A."/>
            <person name="Myers E.W."/>
            <person name="Rubin G.M."/>
            <person name="Venter J.C."/>
        </authorList>
    </citation>
    <scope>NUCLEOTIDE SEQUENCE [LARGE SCALE GENOMIC DNA]</scope>
    <source>
        <strain>Berkeley</strain>
    </source>
</reference>
<reference key="3">
    <citation type="journal article" date="2002" name="Genome Biol.">
        <title>Annotation of the Drosophila melanogaster euchromatic genome: a systematic review.</title>
        <authorList>
            <person name="Misra S."/>
            <person name="Crosby M.A."/>
            <person name="Mungall C.J."/>
            <person name="Matthews B.B."/>
            <person name="Campbell K.S."/>
            <person name="Hradecky P."/>
            <person name="Huang Y."/>
            <person name="Kaminker J.S."/>
            <person name="Millburn G.H."/>
            <person name="Prochnik S.E."/>
            <person name="Smith C.D."/>
            <person name="Tupy J.L."/>
            <person name="Whitfield E.J."/>
            <person name="Bayraktaroglu L."/>
            <person name="Berman B.P."/>
            <person name="Bettencourt B.R."/>
            <person name="Celniker S.E."/>
            <person name="de Grey A.D.N.J."/>
            <person name="Drysdale R.A."/>
            <person name="Harris N.L."/>
            <person name="Richter J."/>
            <person name="Russo S."/>
            <person name="Schroeder A.J."/>
            <person name="Shu S.Q."/>
            <person name="Stapleton M."/>
            <person name="Yamada C."/>
            <person name="Ashburner M."/>
            <person name="Gelbart W.M."/>
            <person name="Rubin G.M."/>
            <person name="Lewis S.E."/>
        </authorList>
    </citation>
    <scope>GENOME REANNOTATION</scope>
    <source>
        <strain>Berkeley</strain>
    </source>
</reference>
<reference key="4">
    <citation type="submission" date="2005-05" db="EMBL/GenBank/DDBJ databases">
        <authorList>
            <person name="Stapleton M."/>
            <person name="Carlson J.W."/>
            <person name="Chavez C."/>
            <person name="Frise E."/>
            <person name="George R.A."/>
            <person name="Pacleb J.M."/>
            <person name="Park S."/>
            <person name="Wan K.H."/>
            <person name="Yu C."/>
            <person name="Celniker S.E."/>
        </authorList>
    </citation>
    <scope>NUCLEOTIDE SEQUENCE [LARGE SCALE MRNA]</scope>
    <source>
        <strain>Berkeley</strain>
    </source>
</reference>
<proteinExistence type="evidence at transcript level"/>
<accession>Q23982</accession>
<accession>Q4V3M3</accession>
<accession>Q4V3M4</accession>
<protein>
    <recommendedName>
        <fullName>Ejaculatory bulb-specific protein 2</fullName>
    </recommendedName>
    <alternativeName>
        <fullName>Ejaculatory bulb-specific protein II</fullName>
    </alternativeName>
    <alternativeName>
        <fullName>PEB-meII</fullName>
    </alternativeName>
</protein>
<comment type="function">
    <text evidence="1">Protein component of the posterior mating plug.</text>
</comment>
<comment type="subcellular location">
    <subcellularLocation>
        <location evidence="3">Secreted</location>
    </subcellularLocation>
</comment>
<comment type="tissue specificity">
    <text>Specifically expressed in the ejaculatory bulb and seminal fluid.</text>
</comment>
<comment type="sequence caution" evidence="3">
    <conflict type="erroneous initiation">
        <sequence resource="EMBL-CDS" id="AAB40023"/>
    </conflict>
</comment>
<comment type="sequence caution" evidence="3">
    <conflict type="frameshift">
        <sequence resource="EMBL-CDS" id="AAY55749"/>
    </conflict>
</comment>
<dbReference type="EMBL" id="U08282">
    <property type="protein sequence ID" value="AAB40023.1"/>
    <property type="status" value="ALT_INIT"/>
    <property type="molecule type" value="mRNA"/>
</dbReference>
<dbReference type="EMBL" id="AE013599">
    <property type="protein sequence ID" value="AAF47318.2"/>
    <property type="molecule type" value="Genomic_DNA"/>
</dbReference>
<dbReference type="EMBL" id="BT023332">
    <property type="protein sequence ID" value="AAY55748.1"/>
    <property type="molecule type" value="mRNA"/>
</dbReference>
<dbReference type="EMBL" id="BT023333">
    <property type="protein sequence ID" value="AAY55749.1"/>
    <property type="status" value="ALT_FRAME"/>
    <property type="molecule type" value="mRNA"/>
</dbReference>
<dbReference type="RefSeq" id="NP_001286879.1">
    <property type="nucleotide sequence ID" value="NM_001299950.1"/>
</dbReference>
<dbReference type="RefSeq" id="NP_523866.2">
    <property type="nucleotide sequence ID" value="NM_079142.4"/>
</dbReference>
<dbReference type="BioGRID" id="77362">
    <property type="interactions" value="2"/>
</dbReference>
<dbReference type="DIP" id="DIP-20073N"/>
<dbReference type="FunCoup" id="Q23982">
    <property type="interactions" value="66"/>
</dbReference>
<dbReference type="IntAct" id="Q23982">
    <property type="interactions" value="2"/>
</dbReference>
<dbReference type="STRING" id="7227.FBpp0311650"/>
<dbReference type="PaxDb" id="7227-FBpp0072357"/>
<dbReference type="DNASU" id="326108"/>
<dbReference type="EnsemblMetazoa" id="FBtr0072455">
    <property type="protein sequence ID" value="FBpp0072357"/>
    <property type="gene ID" value="FBgn0011694"/>
</dbReference>
<dbReference type="EnsemblMetazoa" id="FBtr0345580">
    <property type="protein sequence ID" value="FBpp0311650"/>
    <property type="gene ID" value="FBgn0011694"/>
</dbReference>
<dbReference type="GeneID" id="326108"/>
<dbReference type="KEGG" id="dme:Dmel_CG2665"/>
<dbReference type="AGR" id="FB:FBgn0011694"/>
<dbReference type="CTD" id="326108"/>
<dbReference type="FlyBase" id="FBgn0011694">
    <property type="gene designation" value="EbpII"/>
</dbReference>
<dbReference type="VEuPathDB" id="VectorBase:FBgn0011694"/>
<dbReference type="HOGENOM" id="CLU_2833892_0_0_1"/>
<dbReference type="InParanoid" id="Q23982"/>
<dbReference type="OMA" id="GFRPVFY"/>
<dbReference type="PhylomeDB" id="Q23982"/>
<dbReference type="BioGRID-ORCS" id="326108">
    <property type="hits" value="0 hits in 1 CRISPR screen"/>
</dbReference>
<dbReference type="ChiTaRS" id="EbpII">
    <property type="organism name" value="fly"/>
</dbReference>
<dbReference type="GenomeRNAi" id="326108"/>
<dbReference type="PRO" id="PR:Q23982"/>
<dbReference type="Proteomes" id="UP000000803">
    <property type="component" value="Chromosome 2R"/>
</dbReference>
<dbReference type="Bgee" id="FBgn0011694">
    <property type="expression patterns" value="Expressed in spermatid in male reproductive gland and 54 other cell types or tissues"/>
</dbReference>
<dbReference type="ExpressionAtlas" id="Q23982">
    <property type="expression patterns" value="baseline and differential"/>
</dbReference>
<dbReference type="GO" id="GO:0005576">
    <property type="term" value="C:extracellular region"/>
    <property type="evidence" value="ECO:0000303"/>
    <property type="project" value="UniProtKB"/>
</dbReference>
<dbReference type="GO" id="GO:0005615">
    <property type="term" value="C:extracellular space"/>
    <property type="evidence" value="ECO:0007005"/>
    <property type="project" value="FlyBase"/>
</dbReference>
<dbReference type="GO" id="GO:0042628">
    <property type="term" value="P:mating plug formation"/>
    <property type="evidence" value="ECO:0000250"/>
    <property type="project" value="UniProtKB"/>
</dbReference>
<dbReference type="GO" id="GO:0045434">
    <property type="term" value="P:negative regulation of female receptivity, post-mating"/>
    <property type="evidence" value="ECO:0000315"/>
    <property type="project" value="FlyBase"/>
</dbReference>
<dbReference type="GO" id="GO:0019953">
    <property type="term" value="P:sexual reproduction"/>
    <property type="evidence" value="ECO:0007007"/>
    <property type="project" value="FlyBase"/>
</dbReference>
<evidence type="ECO:0000250" key="1"/>
<evidence type="ECO:0000255" key="2"/>
<evidence type="ECO:0000305" key="3"/>
<evidence type="ECO:0000312" key="4">
    <source>
        <dbReference type="FlyBase" id="FBgn0011694"/>
    </source>
</evidence>
<organism>
    <name type="scientific">Drosophila melanogaster</name>
    <name type="common">Fruit fly</name>
    <dbReference type="NCBI Taxonomy" id="7227"/>
    <lineage>
        <taxon>Eukaryota</taxon>
        <taxon>Metazoa</taxon>
        <taxon>Ecdysozoa</taxon>
        <taxon>Arthropoda</taxon>
        <taxon>Hexapoda</taxon>
        <taxon>Insecta</taxon>
        <taxon>Pterygota</taxon>
        <taxon>Neoptera</taxon>
        <taxon>Endopterygota</taxon>
        <taxon>Diptera</taxon>
        <taxon>Brachycera</taxon>
        <taxon>Muscomorpha</taxon>
        <taxon>Ephydroidea</taxon>
        <taxon>Drosophilidae</taxon>
        <taxon>Drosophila</taxon>
        <taxon>Sophophora</taxon>
    </lineage>
</organism>
<keyword id="KW-0085">Behavior</keyword>
<keyword id="KW-1185">Reference proteome</keyword>
<keyword id="KW-0964">Secreted</keyword>
<keyword id="KW-0732">Signal</keyword>
<gene>
    <name evidence="4" type="primary">EbpII</name>
    <name evidence="4" type="synonym">PebII</name>
    <name evidence="4" type="ORF">CG2665</name>
</gene>
<feature type="signal peptide" evidence="2">
    <location>
        <begin position="1"/>
        <end position="20"/>
    </location>
</feature>
<feature type="chain" id="PRO_0000022036" description="Ejaculatory bulb-specific protein 2">
    <location>
        <begin position="21"/>
        <end position="66"/>
    </location>
</feature>
<name>PEB2_DROME</name>